<gene>
    <name evidence="6" type="primary">oppF</name>
    <name evidence="5" type="synonym">spo0KE</name>
    <name type="ordered locus">BSU11470</name>
</gene>
<sequence>MTEKLLEIKHLKQHFVTPRGTVKAVDDLSFDIYKGETLGLVGESGCGKSTTGRSIIRLYEATDGEVLFNGENVHGRKSRKKLLEFNRKMQMIFQDPYASLNPRMTVADIIAEGLDIHKLAKTKKERMQRVHELLETVGLNKEHANRYPHEFSGGQRQRIGIARALAVDPEFIIADEPISALDVSIQAQVVNLMKELQKEKGLTYLFIAHDLSMVKYISDRIGVMYFGKLVELAPADELYENPLHPYTKSLLSAIPLPDPDYERNRVRQKYDPSVHQLKDGETMEFREVKPGHFVMCTEAEFKAFS</sequence>
<dbReference type="EC" id="7.4.2.6" evidence="8"/>
<dbReference type="EMBL" id="X56347">
    <property type="protein sequence ID" value="CAA39791.1"/>
    <property type="status" value="ALT_INIT"/>
    <property type="molecule type" value="Genomic_DNA"/>
</dbReference>
<dbReference type="EMBL" id="M57689">
    <property type="protein sequence ID" value="AAA62692.1"/>
    <property type="status" value="ALT_INIT"/>
    <property type="molecule type" value="Genomic_DNA"/>
</dbReference>
<dbReference type="EMBL" id="M57689">
    <property type="protein sequence ID" value="AAA62693.1"/>
    <property type="molecule type" value="Genomic_DNA"/>
</dbReference>
<dbReference type="EMBL" id="AL009126">
    <property type="protein sequence ID" value="CAB13004.1"/>
    <property type="molecule type" value="Genomic_DNA"/>
</dbReference>
<dbReference type="PIR" id="E38447">
    <property type="entry name" value="E38447"/>
</dbReference>
<dbReference type="RefSeq" id="NP_389029.1">
    <property type="nucleotide sequence ID" value="NC_000964.3"/>
</dbReference>
<dbReference type="RefSeq" id="WP_003245567.1">
    <property type="nucleotide sequence ID" value="NZ_OZ025638.1"/>
</dbReference>
<dbReference type="SMR" id="P24137"/>
<dbReference type="FunCoup" id="P24137">
    <property type="interactions" value="221"/>
</dbReference>
<dbReference type="STRING" id="224308.BSU11470"/>
<dbReference type="jPOST" id="P24137"/>
<dbReference type="PaxDb" id="224308-BSU11470"/>
<dbReference type="EnsemblBacteria" id="CAB13004">
    <property type="protein sequence ID" value="CAB13004"/>
    <property type="gene ID" value="BSU_11470"/>
</dbReference>
<dbReference type="GeneID" id="936410"/>
<dbReference type="KEGG" id="bsu:BSU11470"/>
<dbReference type="PATRIC" id="fig|224308.179.peg.1233"/>
<dbReference type="eggNOG" id="COG4608">
    <property type="taxonomic scope" value="Bacteria"/>
</dbReference>
<dbReference type="InParanoid" id="P24137"/>
<dbReference type="OrthoDB" id="9802264at2"/>
<dbReference type="PhylomeDB" id="P24137"/>
<dbReference type="BioCyc" id="BSUB:BSU11470-MONOMER"/>
<dbReference type="Proteomes" id="UP000001570">
    <property type="component" value="Chromosome"/>
</dbReference>
<dbReference type="GO" id="GO:0005886">
    <property type="term" value="C:plasma membrane"/>
    <property type="evidence" value="ECO:0007669"/>
    <property type="project" value="UniProtKB-SubCell"/>
</dbReference>
<dbReference type="GO" id="GO:0005524">
    <property type="term" value="F:ATP binding"/>
    <property type="evidence" value="ECO:0007669"/>
    <property type="project" value="UniProtKB-KW"/>
</dbReference>
<dbReference type="GO" id="GO:0016887">
    <property type="term" value="F:ATP hydrolysis activity"/>
    <property type="evidence" value="ECO:0007669"/>
    <property type="project" value="InterPro"/>
</dbReference>
<dbReference type="GO" id="GO:0030420">
    <property type="term" value="P:establishment of competence for transformation"/>
    <property type="evidence" value="ECO:0007669"/>
    <property type="project" value="UniProtKB-KW"/>
</dbReference>
<dbReference type="GO" id="GO:0015833">
    <property type="term" value="P:peptide transport"/>
    <property type="evidence" value="ECO:0007669"/>
    <property type="project" value="UniProtKB-KW"/>
</dbReference>
<dbReference type="GO" id="GO:0015031">
    <property type="term" value="P:protein transport"/>
    <property type="evidence" value="ECO:0007669"/>
    <property type="project" value="UniProtKB-KW"/>
</dbReference>
<dbReference type="GO" id="GO:0030435">
    <property type="term" value="P:sporulation resulting in formation of a cellular spore"/>
    <property type="evidence" value="ECO:0007669"/>
    <property type="project" value="UniProtKB-KW"/>
</dbReference>
<dbReference type="GO" id="GO:0055085">
    <property type="term" value="P:transmembrane transport"/>
    <property type="evidence" value="ECO:0007669"/>
    <property type="project" value="UniProtKB-ARBA"/>
</dbReference>
<dbReference type="CDD" id="cd03257">
    <property type="entry name" value="ABC_NikE_OppD_transporters"/>
    <property type="match status" value="1"/>
</dbReference>
<dbReference type="FunFam" id="3.40.50.300:FF:000016">
    <property type="entry name" value="Oligopeptide ABC transporter ATP-binding component"/>
    <property type="match status" value="1"/>
</dbReference>
<dbReference type="Gene3D" id="3.40.50.300">
    <property type="entry name" value="P-loop containing nucleotide triphosphate hydrolases"/>
    <property type="match status" value="1"/>
</dbReference>
<dbReference type="InterPro" id="IPR003593">
    <property type="entry name" value="AAA+_ATPase"/>
</dbReference>
<dbReference type="InterPro" id="IPR050319">
    <property type="entry name" value="ABC_transp_ATP-bind"/>
</dbReference>
<dbReference type="InterPro" id="IPR003439">
    <property type="entry name" value="ABC_transporter-like_ATP-bd"/>
</dbReference>
<dbReference type="InterPro" id="IPR017871">
    <property type="entry name" value="ABC_transporter-like_CS"/>
</dbReference>
<dbReference type="InterPro" id="IPR013563">
    <property type="entry name" value="Oligopep_ABC_C"/>
</dbReference>
<dbReference type="InterPro" id="IPR027417">
    <property type="entry name" value="P-loop_NTPase"/>
</dbReference>
<dbReference type="PANTHER" id="PTHR43776:SF7">
    <property type="entry name" value="D,D-DIPEPTIDE TRANSPORT ATP-BINDING PROTEIN DDPF-RELATED"/>
    <property type="match status" value="1"/>
</dbReference>
<dbReference type="PANTHER" id="PTHR43776">
    <property type="entry name" value="TRANSPORT ATP-BINDING PROTEIN"/>
    <property type="match status" value="1"/>
</dbReference>
<dbReference type="Pfam" id="PF00005">
    <property type="entry name" value="ABC_tran"/>
    <property type="match status" value="1"/>
</dbReference>
<dbReference type="Pfam" id="PF08352">
    <property type="entry name" value="oligo_HPY"/>
    <property type="match status" value="1"/>
</dbReference>
<dbReference type="SMART" id="SM00382">
    <property type="entry name" value="AAA"/>
    <property type="match status" value="1"/>
</dbReference>
<dbReference type="SUPFAM" id="SSF52540">
    <property type="entry name" value="P-loop containing nucleoside triphosphate hydrolases"/>
    <property type="match status" value="1"/>
</dbReference>
<dbReference type="PROSITE" id="PS00211">
    <property type="entry name" value="ABC_TRANSPORTER_1"/>
    <property type="match status" value="1"/>
</dbReference>
<dbReference type="PROSITE" id="PS50893">
    <property type="entry name" value="ABC_TRANSPORTER_2"/>
    <property type="match status" value="1"/>
</dbReference>
<comment type="function">
    <text evidence="3 4 7">Part of the ABC transporter complex OppABCDF involved in the uptake of oligopeptides (PubMed:1901616). Probably responsible for energy coupling to the transport system (Probable). Required for genetic competence but not for peptide transport or for sporulation (PubMed:1899858, PubMed:1901616).</text>
</comment>
<comment type="catalytic activity">
    <reaction evidence="8">
        <text>a [peptide](out) + ATP + H2O = a [peptide](in) + ADP + phosphate + H(+)</text>
        <dbReference type="Rhea" id="RHEA:78459"/>
        <dbReference type="Rhea" id="RHEA-COMP:19083"/>
        <dbReference type="ChEBI" id="CHEBI:15377"/>
        <dbReference type="ChEBI" id="CHEBI:15378"/>
        <dbReference type="ChEBI" id="CHEBI:30616"/>
        <dbReference type="ChEBI" id="CHEBI:33710"/>
        <dbReference type="ChEBI" id="CHEBI:43474"/>
        <dbReference type="ChEBI" id="CHEBI:456216"/>
        <dbReference type="EC" id="7.4.2.6"/>
    </reaction>
    <physiologicalReaction direction="left-to-right" evidence="8">
        <dbReference type="Rhea" id="RHEA:78460"/>
    </physiologicalReaction>
</comment>
<comment type="subunit">
    <text evidence="8">The complex is composed of two ATP-binding proteins (OppD and OppF), two transmembrane proteins (OppB and OppC) and a solute-binding protein (OppA).</text>
</comment>
<comment type="subcellular location">
    <subcellularLocation>
        <location evidence="7">Cell membrane</location>
        <topology evidence="7">Peripheral membrane protein</topology>
    </subcellularLocation>
</comment>
<comment type="induction">
    <text evidence="2">Positively regulated by TnrA under nitrogen-limited conditions.</text>
</comment>
<comment type="disruption phenotype">
    <text evidence="3 4">Inactivation of the gene does not affect the sporulation process but causes a defect in competence (PubMed:1899858, PubMed:1901616). Disruption does not affect resistance to bialaphos (PubMed:1901616).</text>
</comment>
<comment type="similarity">
    <text evidence="7">Belongs to the ABC transporter superfamily.</text>
</comment>
<comment type="sequence caution" evidence="7">
    <conflict type="erroneous initiation">
        <sequence resource="EMBL-CDS" id="AAA62692"/>
    </conflict>
</comment>
<comment type="sequence caution" evidence="7">
    <conflict type="erroneous initiation">
        <sequence resource="EMBL-CDS" id="CAA39791"/>
    </conflict>
</comment>
<keyword id="KW-0067">ATP-binding</keyword>
<keyword id="KW-1003">Cell membrane</keyword>
<keyword id="KW-0178">Competence</keyword>
<keyword id="KW-0472">Membrane</keyword>
<keyword id="KW-0547">Nucleotide-binding</keyword>
<keyword id="KW-0571">Peptide transport</keyword>
<keyword id="KW-0653">Protein transport</keyword>
<keyword id="KW-1185">Reference proteome</keyword>
<keyword id="KW-0749">Sporulation</keyword>
<keyword id="KW-1278">Translocase</keyword>
<keyword id="KW-0813">Transport</keyword>
<reference key="1">
    <citation type="journal article" date="1991" name="Mol. Microbiol.">
        <title>The oligopeptide transport system of Bacillus subtilis plays a role in the initiation of sporulation.</title>
        <authorList>
            <person name="Perego M."/>
            <person name="Higgins C.F."/>
            <person name="Pearce S.R."/>
            <person name="Gallagher M.P."/>
            <person name="Hoch J.A."/>
        </authorList>
    </citation>
    <scope>NUCLEOTIDE SEQUENCE [GENOMIC DNA]</scope>
    <scope>FUNCTION</scope>
    <scope>SUBUNIT</scope>
    <scope>DISRUPTION PHENOTYPE</scope>
    <source>
        <strain>168</strain>
    </source>
</reference>
<reference key="2">
    <citation type="journal article" date="1991" name="J. Bacteriol.">
        <title>The spo0K locus of Bacillus subtilis is homologous to the oligopeptide permease locus and is required for sporulation and competence.</title>
        <authorList>
            <person name="Rudner D.Z."/>
            <person name="Ledeaux J.R."/>
            <person name="Ireton K."/>
            <person name="Grossman A.D."/>
        </authorList>
    </citation>
    <scope>NUCLEOTIDE SEQUENCE [GENOMIC DNA]</scope>
    <scope>FUNCTION</scope>
    <scope>DISRUPTION PHENOTYPE</scope>
    <source>
        <strain>168</strain>
    </source>
</reference>
<reference key="3">
    <citation type="journal article" date="1997" name="Nature">
        <title>The complete genome sequence of the Gram-positive bacterium Bacillus subtilis.</title>
        <authorList>
            <person name="Kunst F."/>
            <person name="Ogasawara N."/>
            <person name="Moszer I."/>
            <person name="Albertini A.M."/>
            <person name="Alloni G."/>
            <person name="Azevedo V."/>
            <person name="Bertero M.G."/>
            <person name="Bessieres P."/>
            <person name="Bolotin A."/>
            <person name="Borchert S."/>
            <person name="Borriss R."/>
            <person name="Boursier L."/>
            <person name="Brans A."/>
            <person name="Braun M."/>
            <person name="Brignell S.C."/>
            <person name="Bron S."/>
            <person name="Brouillet S."/>
            <person name="Bruschi C.V."/>
            <person name="Caldwell B."/>
            <person name="Capuano V."/>
            <person name="Carter N.M."/>
            <person name="Choi S.-K."/>
            <person name="Codani J.-J."/>
            <person name="Connerton I.F."/>
            <person name="Cummings N.J."/>
            <person name="Daniel R.A."/>
            <person name="Denizot F."/>
            <person name="Devine K.M."/>
            <person name="Duesterhoeft A."/>
            <person name="Ehrlich S.D."/>
            <person name="Emmerson P.T."/>
            <person name="Entian K.-D."/>
            <person name="Errington J."/>
            <person name="Fabret C."/>
            <person name="Ferrari E."/>
            <person name="Foulger D."/>
            <person name="Fritz C."/>
            <person name="Fujita M."/>
            <person name="Fujita Y."/>
            <person name="Fuma S."/>
            <person name="Galizzi A."/>
            <person name="Galleron N."/>
            <person name="Ghim S.-Y."/>
            <person name="Glaser P."/>
            <person name="Goffeau A."/>
            <person name="Golightly E.J."/>
            <person name="Grandi G."/>
            <person name="Guiseppi G."/>
            <person name="Guy B.J."/>
            <person name="Haga K."/>
            <person name="Haiech J."/>
            <person name="Harwood C.R."/>
            <person name="Henaut A."/>
            <person name="Hilbert H."/>
            <person name="Holsappel S."/>
            <person name="Hosono S."/>
            <person name="Hullo M.-F."/>
            <person name="Itaya M."/>
            <person name="Jones L.-M."/>
            <person name="Joris B."/>
            <person name="Karamata D."/>
            <person name="Kasahara Y."/>
            <person name="Klaerr-Blanchard M."/>
            <person name="Klein C."/>
            <person name="Kobayashi Y."/>
            <person name="Koetter P."/>
            <person name="Koningstein G."/>
            <person name="Krogh S."/>
            <person name="Kumano M."/>
            <person name="Kurita K."/>
            <person name="Lapidus A."/>
            <person name="Lardinois S."/>
            <person name="Lauber J."/>
            <person name="Lazarevic V."/>
            <person name="Lee S.-M."/>
            <person name="Levine A."/>
            <person name="Liu H."/>
            <person name="Masuda S."/>
            <person name="Mauel C."/>
            <person name="Medigue C."/>
            <person name="Medina N."/>
            <person name="Mellado R.P."/>
            <person name="Mizuno M."/>
            <person name="Moestl D."/>
            <person name="Nakai S."/>
            <person name="Noback M."/>
            <person name="Noone D."/>
            <person name="O'Reilly M."/>
            <person name="Ogawa K."/>
            <person name="Ogiwara A."/>
            <person name="Oudega B."/>
            <person name="Park S.-H."/>
            <person name="Parro V."/>
            <person name="Pohl T.M."/>
            <person name="Portetelle D."/>
            <person name="Porwollik S."/>
            <person name="Prescott A.M."/>
            <person name="Presecan E."/>
            <person name="Pujic P."/>
            <person name="Purnelle B."/>
            <person name="Rapoport G."/>
            <person name="Rey M."/>
            <person name="Reynolds S."/>
            <person name="Rieger M."/>
            <person name="Rivolta C."/>
            <person name="Rocha E."/>
            <person name="Roche B."/>
            <person name="Rose M."/>
            <person name="Sadaie Y."/>
            <person name="Sato T."/>
            <person name="Scanlan E."/>
            <person name="Schleich S."/>
            <person name="Schroeter R."/>
            <person name="Scoffone F."/>
            <person name="Sekiguchi J."/>
            <person name="Sekowska A."/>
            <person name="Seror S.J."/>
            <person name="Serror P."/>
            <person name="Shin B.-S."/>
            <person name="Soldo B."/>
            <person name="Sorokin A."/>
            <person name="Tacconi E."/>
            <person name="Takagi T."/>
            <person name="Takahashi H."/>
            <person name="Takemaru K."/>
            <person name="Takeuchi M."/>
            <person name="Tamakoshi A."/>
            <person name="Tanaka T."/>
            <person name="Terpstra P."/>
            <person name="Tognoni A."/>
            <person name="Tosato V."/>
            <person name="Uchiyama S."/>
            <person name="Vandenbol M."/>
            <person name="Vannier F."/>
            <person name="Vassarotti A."/>
            <person name="Viari A."/>
            <person name="Wambutt R."/>
            <person name="Wedler E."/>
            <person name="Wedler H."/>
            <person name="Weitzenegger T."/>
            <person name="Winters P."/>
            <person name="Wipat A."/>
            <person name="Yamamoto H."/>
            <person name="Yamane K."/>
            <person name="Yasumoto K."/>
            <person name="Yata K."/>
            <person name="Yoshida K."/>
            <person name="Yoshikawa H.-F."/>
            <person name="Zumstein E."/>
            <person name="Yoshikawa H."/>
            <person name="Danchin A."/>
        </authorList>
    </citation>
    <scope>NUCLEOTIDE SEQUENCE [LARGE SCALE GENOMIC DNA]</scope>
    <source>
        <strain>168</strain>
    </source>
</reference>
<reference key="4">
    <citation type="journal article" date="2003" name="Mol. Microbiol.">
        <title>Identification of additional TnrA-regulated genes of Bacillus subtilis associated with a TnrA box.</title>
        <authorList>
            <person name="Yoshida K."/>
            <person name="Yamaguchi H."/>
            <person name="Kinehara M."/>
            <person name="Ohki Y.-H."/>
            <person name="Nakaura Y."/>
            <person name="Fujita Y."/>
        </authorList>
    </citation>
    <scope>INDUCTION BY TNRA</scope>
</reference>
<organism>
    <name type="scientific">Bacillus subtilis (strain 168)</name>
    <dbReference type="NCBI Taxonomy" id="224308"/>
    <lineage>
        <taxon>Bacteria</taxon>
        <taxon>Bacillati</taxon>
        <taxon>Bacillota</taxon>
        <taxon>Bacilli</taxon>
        <taxon>Bacillales</taxon>
        <taxon>Bacillaceae</taxon>
        <taxon>Bacillus</taxon>
    </lineage>
</organism>
<feature type="chain" id="PRO_0000092661" description="Oligopeptide transport ATP-binding protein OppF">
    <location>
        <begin position="1"/>
        <end position="305"/>
    </location>
</feature>
<feature type="domain" description="ABC transporter" evidence="1">
    <location>
        <begin position="6"/>
        <end position="251"/>
    </location>
</feature>
<feature type="binding site" evidence="1">
    <location>
        <begin position="42"/>
        <end position="49"/>
    </location>
    <ligand>
        <name>ATP</name>
        <dbReference type="ChEBI" id="CHEBI:30616"/>
    </ligand>
</feature>
<feature type="sequence conflict" description="In Ref. 1; CAA39791." evidence="7" ref="1">
    <original>VRQK</original>
    <variation>CSE</variation>
    <location>
        <begin position="266"/>
        <end position="269"/>
    </location>
</feature>
<evidence type="ECO:0000255" key="1">
    <source>
        <dbReference type="PROSITE-ProRule" id="PRU00434"/>
    </source>
</evidence>
<evidence type="ECO:0000269" key="2">
    <source>
    </source>
</evidence>
<evidence type="ECO:0000269" key="3">
    <source>
    </source>
</evidence>
<evidence type="ECO:0000269" key="4">
    <source>
    </source>
</evidence>
<evidence type="ECO:0000303" key="5">
    <source>
    </source>
</evidence>
<evidence type="ECO:0000303" key="6">
    <source>
    </source>
</evidence>
<evidence type="ECO:0000305" key="7"/>
<evidence type="ECO:0000305" key="8">
    <source>
    </source>
</evidence>
<name>OPPF_BACSU</name>
<accession>P24137</accession>
<accession>O31599</accession>
<accession>P23366</accession>
<proteinExistence type="evidence at protein level"/>
<protein>
    <recommendedName>
        <fullName evidence="7">Oligopeptide transport ATP-binding protein OppF</fullName>
        <ecNumber evidence="8">7.4.2.6</ecNumber>
    </recommendedName>
    <alternativeName>
        <fullName>Stage 0 sporulation protein KE</fullName>
    </alternativeName>
</protein>